<name>SYY_PARMW</name>
<dbReference type="EC" id="6.1.1.1" evidence="1"/>
<dbReference type="EMBL" id="BX569690">
    <property type="protein sequence ID" value="CAE07083.1"/>
    <property type="molecule type" value="Genomic_DNA"/>
</dbReference>
<dbReference type="RefSeq" id="WP_011127437.1">
    <property type="nucleotide sequence ID" value="NC_005070.1"/>
</dbReference>
<dbReference type="SMR" id="Q7TTW9"/>
<dbReference type="STRING" id="84588.SYNW0568"/>
<dbReference type="KEGG" id="syw:SYNW0568"/>
<dbReference type="eggNOG" id="COG0162">
    <property type="taxonomic scope" value="Bacteria"/>
</dbReference>
<dbReference type="HOGENOM" id="CLU_024003_5_0_3"/>
<dbReference type="Proteomes" id="UP000001422">
    <property type="component" value="Chromosome"/>
</dbReference>
<dbReference type="GO" id="GO:0005829">
    <property type="term" value="C:cytosol"/>
    <property type="evidence" value="ECO:0007669"/>
    <property type="project" value="TreeGrafter"/>
</dbReference>
<dbReference type="GO" id="GO:0005524">
    <property type="term" value="F:ATP binding"/>
    <property type="evidence" value="ECO:0007669"/>
    <property type="project" value="UniProtKB-UniRule"/>
</dbReference>
<dbReference type="GO" id="GO:0003723">
    <property type="term" value="F:RNA binding"/>
    <property type="evidence" value="ECO:0007669"/>
    <property type="project" value="UniProtKB-KW"/>
</dbReference>
<dbReference type="GO" id="GO:0004831">
    <property type="term" value="F:tyrosine-tRNA ligase activity"/>
    <property type="evidence" value="ECO:0007669"/>
    <property type="project" value="UniProtKB-UniRule"/>
</dbReference>
<dbReference type="GO" id="GO:0006437">
    <property type="term" value="P:tyrosyl-tRNA aminoacylation"/>
    <property type="evidence" value="ECO:0007669"/>
    <property type="project" value="UniProtKB-UniRule"/>
</dbReference>
<dbReference type="CDD" id="cd00165">
    <property type="entry name" value="S4"/>
    <property type="match status" value="1"/>
</dbReference>
<dbReference type="CDD" id="cd00805">
    <property type="entry name" value="TyrRS_core"/>
    <property type="match status" value="1"/>
</dbReference>
<dbReference type="Gene3D" id="3.40.50.620">
    <property type="entry name" value="HUPs"/>
    <property type="match status" value="1"/>
</dbReference>
<dbReference type="Gene3D" id="3.10.290.10">
    <property type="entry name" value="RNA-binding S4 domain"/>
    <property type="match status" value="1"/>
</dbReference>
<dbReference type="Gene3D" id="1.10.240.10">
    <property type="entry name" value="Tyrosyl-Transfer RNA Synthetase"/>
    <property type="match status" value="1"/>
</dbReference>
<dbReference type="HAMAP" id="MF_02007">
    <property type="entry name" value="Tyr_tRNA_synth_type2"/>
    <property type="match status" value="1"/>
</dbReference>
<dbReference type="InterPro" id="IPR002305">
    <property type="entry name" value="aa-tRNA-synth_Ic"/>
</dbReference>
<dbReference type="InterPro" id="IPR014729">
    <property type="entry name" value="Rossmann-like_a/b/a_fold"/>
</dbReference>
<dbReference type="InterPro" id="IPR036986">
    <property type="entry name" value="S4_RNA-bd_sf"/>
</dbReference>
<dbReference type="InterPro" id="IPR054608">
    <property type="entry name" value="SYY-like_C"/>
</dbReference>
<dbReference type="InterPro" id="IPR002307">
    <property type="entry name" value="Tyr-tRNA-ligase"/>
</dbReference>
<dbReference type="InterPro" id="IPR024088">
    <property type="entry name" value="Tyr-tRNA-ligase_bac-type"/>
</dbReference>
<dbReference type="InterPro" id="IPR024108">
    <property type="entry name" value="Tyr-tRNA-ligase_bac_2"/>
</dbReference>
<dbReference type="NCBIfam" id="TIGR00234">
    <property type="entry name" value="tyrS"/>
    <property type="match status" value="1"/>
</dbReference>
<dbReference type="PANTHER" id="PTHR11766:SF1">
    <property type="entry name" value="TYROSINE--TRNA LIGASE"/>
    <property type="match status" value="1"/>
</dbReference>
<dbReference type="PANTHER" id="PTHR11766">
    <property type="entry name" value="TYROSYL-TRNA SYNTHETASE"/>
    <property type="match status" value="1"/>
</dbReference>
<dbReference type="Pfam" id="PF22421">
    <property type="entry name" value="SYY_C-terminal"/>
    <property type="match status" value="1"/>
</dbReference>
<dbReference type="Pfam" id="PF00579">
    <property type="entry name" value="tRNA-synt_1b"/>
    <property type="match status" value="1"/>
</dbReference>
<dbReference type="PRINTS" id="PR01040">
    <property type="entry name" value="TRNASYNTHTYR"/>
</dbReference>
<dbReference type="SUPFAM" id="SSF55174">
    <property type="entry name" value="Alpha-L RNA-binding motif"/>
    <property type="match status" value="1"/>
</dbReference>
<dbReference type="SUPFAM" id="SSF52374">
    <property type="entry name" value="Nucleotidylyl transferase"/>
    <property type="match status" value="1"/>
</dbReference>
<dbReference type="PROSITE" id="PS50889">
    <property type="entry name" value="S4"/>
    <property type="match status" value="1"/>
</dbReference>
<feature type="chain" id="PRO_0000236770" description="Tyrosine--tRNA ligase">
    <location>
        <begin position="1"/>
        <end position="415"/>
    </location>
</feature>
<feature type="domain" description="S4 RNA-binding" evidence="1">
    <location>
        <begin position="351"/>
        <end position="415"/>
    </location>
</feature>
<feature type="short sequence motif" description="'HIGH' region">
    <location>
        <begin position="54"/>
        <end position="63"/>
    </location>
</feature>
<feature type="short sequence motif" description="'KMSKS' region">
    <location>
        <begin position="248"/>
        <end position="252"/>
    </location>
</feature>
<feature type="binding site" evidence="1">
    <location>
        <position position="251"/>
    </location>
    <ligand>
        <name>ATP</name>
        <dbReference type="ChEBI" id="CHEBI:30616"/>
    </ligand>
</feature>
<proteinExistence type="inferred from homology"/>
<evidence type="ECO:0000255" key="1">
    <source>
        <dbReference type="HAMAP-Rule" id="MF_02007"/>
    </source>
</evidence>
<reference key="1">
    <citation type="journal article" date="2003" name="Nature">
        <title>The genome of a motile marine Synechococcus.</title>
        <authorList>
            <person name="Palenik B."/>
            <person name="Brahamsha B."/>
            <person name="Larimer F.W."/>
            <person name="Land M.L."/>
            <person name="Hauser L."/>
            <person name="Chain P."/>
            <person name="Lamerdin J.E."/>
            <person name="Regala W."/>
            <person name="Allen E.E."/>
            <person name="McCarren J."/>
            <person name="Paulsen I.T."/>
            <person name="Dufresne A."/>
            <person name="Partensky F."/>
            <person name="Webb E.A."/>
            <person name="Waterbury J."/>
        </authorList>
    </citation>
    <scope>NUCLEOTIDE SEQUENCE [LARGE SCALE GENOMIC DNA]</scope>
    <source>
        <strain>WH8102</strain>
    </source>
</reference>
<organism>
    <name type="scientific">Parasynechococcus marenigrum (strain WH8102)</name>
    <dbReference type="NCBI Taxonomy" id="84588"/>
    <lineage>
        <taxon>Bacteria</taxon>
        <taxon>Bacillati</taxon>
        <taxon>Cyanobacteriota</taxon>
        <taxon>Cyanophyceae</taxon>
        <taxon>Synechococcales</taxon>
        <taxon>Prochlorococcaceae</taxon>
        <taxon>Parasynechococcus</taxon>
        <taxon>Parasynechococcus marenigrum</taxon>
    </lineage>
</organism>
<comment type="function">
    <text evidence="1">Catalyzes the attachment of tyrosine to tRNA(Tyr) in a two-step reaction: tyrosine is first activated by ATP to form Tyr-AMP and then transferred to the acceptor end of tRNA(Tyr).</text>
</comment>
<comment type="catalytic activity">
    <reaction evidence="1">
        <text>tRNA(Tyr) + L-tyrosine + ATP = L-tyrosyl-tRNA(Tyr) + AMP + diphosphate + H(+)</text>
        <dbReference type="Rhea" id="RHEA:10220"/>
        <dbReference type="Rhea" id="RHEA-COMP:9706"/>
        <dbReference type="Rhea" id="RHEA-COMP:9707"/>
        <dbReference type="ChEBI" id="CHEBI:15378"/>
        <dbReference type="ChEBI" id="CHEBI:30616"/>
        <dbReference type="ChEBI" id="CHEBI:33019"/>
        <dbReference type="ChEBI" id="CHEBI:58315"/>
        <dbReference type="ChEBI" id="CHEBI:78442"/>
        <dbReference type="ChEBI" id="CHEBI:78536"/>
        <dbReference type="ChEBI" id="CHEBI:456215"/>
        <dbReference type="EC" id="6.1.1.1"/>
    </reaction>
</comment>
<comment type="subunit">
    <text evidence="1">Homodimer.</text>
</comment>
<comment type="subcellular location">
    <subcellularLocation>
        <location evidence="1">Cytoplasm</location>
    </subcellularLocation>
</comment>
<comment type="similarity">
    <text evidence="1">Belongs to the class-I aminoacyl-tRNA synthetase family. TyrS type 2 subfamily.</text>
</comment>
<keyword id="KW-0030">Aminoacyl-tRNA synthetase</keyword>
<keyword id="KW-0067">ATP-binding</keyword>
<keyword id="KW-0963">Cytoplasm</keyword>
<keyword id="KW-0436">Ligase</keyword>
<keyword id="KW-0547">Nucleotide-binding</keyword>
<keyword id="KW-0648">Protein biosynthesis</keyword>
<keyword id="KW-0694">RNA-binding</keyword>
<protein>
    <recommendedName>
        <fullName evidence="1">Tyrosine--tRNA ligase</fullName>
        <ecNumber evidence="1">6.1.1.1</ecNumber>
    </recommendedName>
    <alternativeName>
        <fullName evidence="1">Tyrosyl-tRNA synthetase</fullName>
        <shortName evidence="1">TyrRS</shortName>
    </alternativeName>
</protein>
<gene>
    <name evidence="1" type="primary">tyrS</name>
    <name type="ordered locus">SYNW0568</name>
</gene>
<accession>Q7TTW9</accession>
<sequence length="415" mass="44287">MPESTPSLPDWLSRGMADLFPAGDPTDADQALAARLAQAEKEGRPLRVKLGIDPTGSNIHLGHSILFRKLRAFQDAGHTAVLIIGDFTARIGDPTGKCATRVQLSKEDVAANASTYLRQLGQDQPKETALLDFETPGRLEVRYNSEWLEGMDLPAVIGLLGTGTVGQMLAKDDFSKRYGSGTPIALHEFLYPLLQGYDSVAVNADVELGGTDQKFNVAMGRDLQRHFNKGTQFGLLLPILVGLDGVQKMSKSLGNVVGLEEDPLSMYSKLEKVGDGAINDYVTLLTDLDLATLPENPREKQKAMALAVTASRHGMEAAQKAQLDAASLVGGAGDAATEVPGASLAEVNFPAKAFYLLSAVGICASSSEARRQIKGGAVRLEGEKIGDPNQEFASAAELEGKVLQLGKKTFRRLTA</sequence>